<proteinExistence type="inferred from homology"/>
<name>ARC_STANL</name>
<comment type="function">
    <text evidence="1">ATPase which is responsible for recognizing, binding, unfolding and translocation of pupylated proteins into the bacterial 20S proteasome core particle. May be essential for opening the gate of the 20S proteasome via an interaction with its C-terminus, thereby allowing substrate entry and access to the site of proteolysis. Thus, the C-termini of the proteasomal ATPase may function like a 'key in a lock' to induce gate opening and therefore regulate proteolysis.</text>
</comment>
<comment type="pathway">
    <text evidence="1">Protein degradation; proteasomal Pup-dependent pathway.</text>
</comment>
<comment type="subunit">
    <text evidence="1">Homohexamer. Assembles into a hexameric ring structure that caps the 20S proteasome core. Strongly interacts with the prokaryotic ubiquitin-like protein Pup through a hydrophobic interface; the interacting region of ARC lies in its N-terminal coiled-coil domain. There is one Pup binding site per ARC hexamer ring. Upon ATP-binding, the C-terminus of ARC interacts with the alpha-rings of the proteasome core, possibly by binding to the intersubunit pockets.</text>
</comment>
<comment type="domain">
    <text evidence="1">Consists of three main regions, an N-terminal coiled-coil domain that binds to protein Pup and functions as a docking station, an interdomain involved in ARC hexamerization, and a C-terminal ATPase domain of the AAA type.</text>
</comment>
<comment type="similarity">
    <text evidence="1">Belongs to the AAA ATPase family.</text>
</comment>
<sequence length="596" mass="66697">MSRNDDEQARGSRWERETQDLSTQVEYLQEELALARRKLTETPGHVRLLEERLAATKAQVERMSEQNERLVATLKDAREQIVTLKEEIDRLAQPPSGYGVFIEAREDGTVDVFTGGRKMRVALSPSIEPESLRRGQEVLLNDALNVVESLGFERAGDVVTLKELIESDTGHPDRALVTSHADEERVVHLADSLTNAPLRAGDSLLVEPRSGYAYERIQKSEVEELVLEEVPDVDYESIGGLDGQIELIRDAVELPFLHADLFAEYELRPPKGVLLYGPPGCGKTLIAKAVANSLAKKVAEARGDDFTGGDRAKSYFLNIKGPELLNKYVGETERHIRLVFQRAREKASEGQPVIVFFDEMDSVFRTRGSGVSSDVENTIVPQLLSEIDGVEGLENVIVIGASNREDMIDPAILRPGRLDVKIKIERPDAESARDIFSKYVTTKLPLNEADLAEQGGSREACVQEMIQQAVERMYTETEENRFLEVTYADGDKEVLYFKDFNSGAMIQNIVDRAKKMAIKEFLNSQRKGLRLQHLLDACVDEFRENEDLPNTTNPDDWARISGKKGERIVYIRTLVSGKGDESGRSIDTVSNTGQYL</sequence>
<feature type="chain" id="PRO_0000397021" description="Proteasome-associated ATPase">
    <location>
        <begin position="1"/>
        <end position="596"/>
    </location>
</feature>
<feature type="region of interest" description="Docks into pockets in the proteasome alpha-ring" evidence="1">
    <location>
        <begin position="595"/>
        <end position="596"/>
    </location>
</feature>
<feature type="coiled-coil region" evidence="1">
    <location>
        <begin position="12"/>
        <end position="94"/>
    </location>
</feature>
<feature type="binding site" evidence="1">
    <location>
        <begin position="280"/>
        <end position="285"/>
    </location>
    <ligand>
        <name>ATP</name>
        <dbReference type="ChEBI" id="CHEBI:30616"/>
    </ligand>
</feature>
<dbReference type="EMBL" id="CP001778">
    <property type="protein sequence ID" value="ADD44117.1"/>
    <property type="molecule type" value="Genomic_DNA"/>
</dbReference>
<dbReference type="SMR" id="D3Q568"/>
<dbReference type="STRING" id="446470.Snas_4472"/>
<dbReference type="KEGG" id="sna:Snas_4472"/>
<dbReference type="eggNOG" id="COG1222">
    <property type="taxonomic scope" value="Bacteria"/>
</dbReference>
<dbReference type="HOGENOM" id="CLU_036054_0_0_11"/>
<dbReference type="OrthoDB" id="9809379at2"/>
<dbReference type="UniPathway" id="UPA00997"/>
<dbReference type="Proteomes" id="UP000000844">
    <property type="component" value="Chromosome"/>
</dbReference>
<dbReference type="GO" id="GO:0000502">
    <property type="term" value="C:proteasome complex"/>
    <property type="evidence" value="ECO:0007669"/>
    <property type="project" value="UniProtKB-KW"/>
</dbReference>
<dbReference type="GO" id="GO:0005524">
    <property type="term" value="F:ATP binding"/>
    <property type="evidence" value="ECO:0007669"/>
    <property type="project" value="UniProtKB-UniRule"/>
</dbReference>
<dbReference type="GO" id="GO:0016887">
    <property type="term" value="F:ATP hydrolysis activity"/>
    <property type="evidence" value="ECO:0007669"/>
    <property type="project" value="UniProtKB-UniRule"/>
</dbReference>
<dbReference type="GO" id="GO:0019941">
    <property type="term" value="P:modification-dependent protein catabolic process"/>
    <property type="evidence" value="ECO:0007669"/>
    <property type="project" value="InterPro"/>
</dbReference>
<dbReference type="GO" id="GO:0010498">
    <property type="term" value="P:proteasomal protein catabolic process"/>
    <property type="evidence" value="ECO:0007669"/>
    <property type="project" value="InterPro"/>
</dbReference>
<dbReference type="FunFam" id="3.40.50.300:FF:000155">
    <property type="entry name" value="AAA ATPase forming ring-shaped complexes"/>
    <property type="match status" value="1"/>
</dbReference>
<dbReference type="Gene3D" id="1.10.8.60">
    <property type="match status" value="1"/>
</dbReference>
<dbReference type="Gene3D" id="1.20.5.170">
    <property type="match status" value="1"/>
</dbReference>
<dbReference type="Gene3D" id="2.40.50.140">
    <property type="entry name" value="Nucleic acid-binding proteins"/>
    <property type="match status" value="2"/>
</dbReference>
<dbReference type="Gene3D" id="3.40.50.300">
    <property type="entry name" value="P-loop containing nucleotide triphosphate hydrolases"/>
    <property type="match status" value="1"/>
</dbReference>
<dbReference type="HAMAP" id="MF_02112">
    <property type="entry name" value="ARC_ATPase"/>
    <property type="match status" value="1"/>
</dbReference>
<dbReference type="InterPro" id="IPR003593">
    <property type="entry name" value="AAA+_ATPase"/>
</dbReference>
<dbReference type="InterPro" id="IPR050168">
    <property type="entry name" value="AAA_ATPase_domain"/>
</dbReference>
<dbReference type="InterPro" id="IPR003959">
    <property type="entry name" value="ATPase_AAA_core"/>
</dbReference>
<dbReference type="InterPro" id="IPR003960">
    <property type="entry name" value="ATPase_AAA_CS"/>
</dbReference>
<dbReference type="InterPro" id="IPR012340">
    <property type="entry name" value="NA-bd_OB-fold"/>
</dbReference>
<dbReference type="InterPro" id="IPR027417">
    <property type="entry name" value="P-loop_NTPase"/>
</dbReference>
<dbReference type="InterPro" id="IPR032501">
    <property type="entry name" value="Prot_ATP_ID_OB_2nd"/>
</dbReference>
<dbReference type="InterPro" id="IPR041626">
    <property type="entry name" value="Prot_ATP_ID_OB_N"/>
</dbReference>
<dbReference type="InterPro" id="IPR022482">
    <property type="entry name" value="Proteasome_ATPase"/>
</dbReference>
<dbReference type="NCBIfam" id="TIGR03689">
    <property type="entry name" value="pup_AAA"/>
    <property type="match status" value="1"/>
</dbReference>
<dbReference type="PANTHER" id="PTHR23077">
    <property type="entry name" value="AAA-FAMILY ATPASE"/>
    <property type="match status" value="1"/>
</dbReference>
<dbReference type="PANTHER" id="PTHR23077:SF144">
    <property type="entry name" value="PROTEASOME-ASSOCIATED ATPASE"/>
    <property type="match status" value="1"/>
</dbReference>
<dbReference type="Pfam" id="PF00004">
    <property type="entry name" value="AAA"/>
    <property type="match status" value="1"/>
</dbReference>
<dbReference type="Pfam" id="PF16450">
    <property type="entry name" value="Prot_ATP_ID_OB_C"/>
    <property type="match status" value="1"/>
</dbReference>
<dbReference type="Pfam" id="PF17758">
    <property type="entry name" value="Prot_ATP_ID_OB_N"/>
    <property type="match status" value="1"/>
</dbReference>
<dbReference type="SMART" id="SM00382">
    <property type="entry name" value="AAA"/>
    <property type="match status" value="1"/>
</dbReference>
<dbReference type="SUPFAM" id="SSF52540">
    <property type="entry name" value="P-loop containing nucleoside triphosphate hydrolases"/>
    <property type="match status" value="1"/>
</dbReference>
<dbReference type="PROSITE" id="PS00674">
    <property type="entry name" value="AAA"/>
    <property type="match status" value="1"/>
</dbReference>
<reference key="1">
    <citation type="journal article" date="2009" name="Stand. Genomic Sci.">
        <title>Complete genome sequence of Stackebrandtia nassauensis type strain (LLR-40K-21).</title>
        <authorList>
            <person name="Munk C."/>
            <person name="Lapidus A."/>
            <person name="Copeland A."/>
            <person name="Jando M."/>
            <person name="Mayilraj S."/>
            <person name="Glavina Del Rio T."/>
            <person name="Nolan M."/>
            <person name="Chen F."/>
            <person name="Lucas S."/>
            <person name="Tice H."/>
            <person name="Cheng J.F."/>
            <person name="Han C."/>
            <person name="Detter J.C."/>
            <person name="Bruce D."/>
            <person name="Goodwin L."/>
            <person name="Chain P."/>
            <person name="Pitluck S."/>
            <person name="Goker M."/>
            <person name="Ovchinikova G."/>
            <person name="Pati A."/>
            <person name="Ivanova N."/>
            <person name="Mavromatis K."/>
            <person name="Chen A."/>
            <person name="Palaniappan K."/>
            <person name="Land M."/>
            <person name="Hauser L."/>
            <person name="Chang Y.J."/>
            <person name="Jeffries C.D."/>
            <person name="Bristow J."/>
            <person name="Eisen J.A."/>
            <person name="Markowitz V."/>
            <person name="Hugenholtz P."/>
            <person name="Kyrpides N.C."/>
            <person name="Klenk H.P."/>
        </authorList>
    </citation>
    <scope>NUCLEOTIDE SEQUENCE [LARGE SCALE GENOMIC DNA]</scope>
    <source>
        <strain>DSM 44728 / CIP 108903 / NRRL B-16338 / NBRC 102104 / LLR-40K-21</strain>
    </source>
</reference>
<protein>
    <recommendedName>
        <fullName evidence="1">Proteasome-associated ATPase</fullName>
    </recommendedName>
    <alternativeName>
        <fullName evidence="1">AAA ATPase forming ring-shaped complexes</fullName>
        <shortName evidence="1">ARC</shortName>
    </alternativeName>
    <alternativeName>
        <fullName evidence="1">Proteasomal ATPase</fullName>
    </alternativeName>
</protein>
<organism>
    <name type="scientific">Stackebrandtia nassauensis (strain DSM 44728 / CIP 108903 / NRRL B-16338 / NBRC 102104 / LLR-40K-21)</name>
    <dbReference type="NCBI Taxonomy" id="446470"/>
    <lineage>
        <taxon>Bacteria</taxon>
        <taxon>Bacillati</taxon>
        <taxon>Actinomycetota</taxon>
        <taxon>Actinomycetes</taxon>
        <taxon>Glycomycetales</taxon>
        <taxon>Glycomycetaceae</taxon>
        <taxon>Stackebrandtia</taxon>
    </lineage>
</organism>
<keyword id="KW-0067">ATP-binding</keyword>
<keyword id="KW-0143">Chaperone</keyword>
<keyword id="KW-0175">Coiled coil</keyword>
<keyword id="KW-0547">Nucleotide-binding</keyword>
<keyword id="KW-0647">Proteasome</keyword>
<keyword id="KW-1185">Reference proteome</keyword>
<evidence type="ECO:0000255" key="1">
    <source>
        <dbReference type="HAMAP-Rule" id="MF_02112"/>
    </source>
</evidence>
<accession>D3Q568</accession>
<gene>
    <name evidence="1" type="primary">arc</name>
    <name type="ordered locus">Snas_4472</name>
</gene>